<gene>
    <name type="primary">OAZ2</name>
</gene>
<organism>
    <name type="scientific">Homo sapiens</name>
    <name type="common">Human</name>
    <dbReference type="NCBI Taxonomy" id="9606"/>
    <lineage>
        <taxon>Eukaryota</taxon>
        <taxon>Metazoa</taxon>
        <taxon>Chordata</taxon>
        <taxon>Craniata</taxon>
        <taxon>Vertebrata</taxon>
        <taxon>Euteleostomi</taxon>
        <taxon>Mammalia</taxon>
        <taxon>Eutheria</taxon>
        <taxon>Euarchontoglires</taxon>
        <taxon>Primates</taxon>
        <taxon>Haplorrhini</taxon>
        <taxon>Catarrhini</taxon>
        <taxon>Hominidae</taxon>
        <taxon>Homo</taxon>
    </lineage>
</organism>
<feature type="chain" id="PRO_0000220857" description="Ornithine decarboxylase antizyme 2">
    <location>
        <begin position="1"/>
        <end position="189"/>
    </location>
</feature>
<feature type="modified residue" description="Phosphoserine" evidence="2">
    <location>
        <position position="186"/>
    </location>
</feature>
<feature type="sequence variant" id="VAR_050420" description="In dbSNP:rs3751534.">
    <original>P</original>
    <variation>L</variation>
    <location>
        <position position="70"/>
    </location>
</feature>
<reference key="1">
    <citation type="journal article" date="1998" name="Genomics">
        <title>A second mammalian antizyme: conservation of programmed ribosomal frameshifting.</title>
        <authorList>
            <person name="Ivanov I.P."/>
            <person name="Gesteland R.F."/>
            <person name="Atkins J.F."/>
        </authorList>
    </citation>
    <scope>NUCLEOTIDE SEQUENCE [MRNA]</scope>
</reference>
<reference key="2">
    <citation type="journal article" date="1999" name="Gene">
        <title>Structure of human ornithine decarboxylase antizyme 2 gene.</title>
        <authorList>
            <person name="Zhou J."/>
            <person name="Atkins J.F."/>
            <person name="Gesteland R.F."/>
        </authorList>
    </citation>
    <scope>NUCLEOTIDE SEQUENCE [MRNA]</scope>
</reference>
<reference key="3">
    <citation type="journal article" date="2008" name="Biochem. J.">
        <title>Human ornithine decarboxylase paralogue (ODCp) is an antizyme inhibitor but not an arginine decarboxylase.</title>
        <authorList>
            <person name="Kanerva K."/>
            <person name="Makitie L.T."/>
            <person name="Pelander A."/>
            <person name="Heiskala M."/>
            <person name="Andersson L.C."/>
        </authorList>
    </citation>
    <scope>FUNCTION</scope>
    <scope>INTERACTION WITH AZIN2</scope>
</reference>
<comment type="function">
    <text evidence="2 4">Ornithine decarboxylase (ODC) antizyme protein that negatively regulates ODC activity and intracellular polyamine biosynthesis and uptake in response to increased intracellular polyamine levels. Binds to ODC monomers, inhibiting the assembly of the functional ODC homodimers. Does not target the ODC monomers for degradation, which allows a protein synthesis-independent restoration of ODC activity (PubMed:17900240). Involved in the translocation of AZIN2 from ER-Golgi intermediate compartment (ERGIC) to the cytosol (By similarity).</text>
</comment>
<comment type="subunit">
    <text evidence="3 4">Interacts with ODC1 and thereby sterically blocks ODC homodimerization (By similarity). Interacts with AZIN2; this interaction disrupts the interaction between the antizyme and ODC1 (PubMed:17900240).</text>
</comment>
<comment type="interaction">
    <interactant intactId="EBI-1051861">
        <id>O95190</id>
    </interactant>
    <interactant intactId="EBI-1181367">
        <id>Q01850</id>
        <label>CDR2</label>
    </interactant>
    <organismsDiffer>false</organismsDiffer>
    <experiments>3</experiments>
</comment>
<comment type="interaction">
    <interactant intactId="EBI-1051861">
        <id>O95190</id>
    </interactant>
    <interactant intactId="EBI-2840607">
        <id>Q4VX76</id>
        <label>SYTL3</label>
    </interactant>
    <organismsDiffer>false</organismsDiffer>
    <experiments>3</experiments>
</comment>
<comment type="subcellular location">
    <subcellularLocation>
        <location evidence="1">Nucleus</location>
    </subcellularLocation>
</comment>
<comment type="alternative products">
    <event type="ribosomal frameshifting"/>
    <isoform>
        <id>O95190-1</id>
        <name>1</name>
        <sequence type="displayed"/>
    </isoform>
    <text>A ribosomal frameshift occurs between the codons for Ser-32 and Asp-33. An autoregulatory mechanism enables modulation of frameshifting according to the cellular concentration of polyamines.</text>
</comment>
<comment type="similarity">
    <text evidence="5">Belongs to the ODC antizyme family.</text>
</comment>
<evidence type="ECO:0000250" key="1"/>
<evidence type="ECO:0000250" key="2">
    <source>
        <dbReference type="UniProtKB" id="O08608"/>
    </source>
</evidence>
<evidence type="ECO:0000250" key="3">
    <source>
        <dbReference type="UniProtKB" id="P54368"/>
    </source>
</evidence>
<evidence type="ECO:0000269" key="4">
    <source>
    </source>
</evidence>
<evidence type="ECO:0000305" key="5"/>
<keyword id="KW-0539">Nucleus</keyword>
<keyword id="KW-0597">Phosphoprotein</keyword>
<keyword id="KW-0620">Polyamine biosynthesis</keyword>
<keyword id="KW-1267">Proteomics identification</keyword>
<keyword id="KW-1185">Reference proteome</keyword>
<keyword id="KW-0688">Ribosomal frameshifting</keyword>
<proteinExistence type="evidence at protein level"/>
<protein>
    <recommendedName>
        <fullName>Ornithine decarboxylase antizyme 2</fullName>
        <shortName>AZ2</shortName>
        <shortName>ODC-Az 2</shortName>
    </recommendedName>
</protein>
<accession>O95190</accession>
<sequence length="189" mass="21011">MINTQDSSILPLSNCPQLQCCRHIVPGPLWCSDAPHPLSKIPGGRGGGRDPSLSALIYKDEKLTVTQDLPVNDGKPHIVHFQYEVTEVKVSSWDAVLSSQSLFVEIPDGLLADGSKEGLLALLEFAEEKMKVNYVFICFRKGREDRAPLLKTFSFLGFEIVRPGHPCVPSRPDVMFMVYPLDQNLSDED</sequence>
<dbReference type="EMBL" id="AF057297">
    <property type="protein sequence ID" value="AAD03265.1"/>
    <property type="molecule type" value="mRNA"/>
</dbReference>
<dbReference type="CCDS" id="CCDS58372.1">
    <molecule id="O95190-1"/>
</dbReference>
<dbReference type="RefSeq" id="NP_002528.1">
    <molecule id="O95190-1"/>
    <property type="nucleotide sequence ID" value="NM_002537.3"/>
</dbReference>
<dbReference type="SMR" id="O95190"/>
<dbReference type="BioGRID" id="111001">
    <property type="interactions" value="11"/>
</dbReference>
<dbReference type="FunCoup" id="O95190">
    <property type="interactions" value="2975"/>
</dbReference>
<dbReference type="IntAct" id="O95190">
    <property type="interactions" value="5"/>
</dbReference>
<dbReference type="MINT" id="O95190"/>
<dbReference type="STRING" id="9606.ENSP00000463013"/>
<dbReference type="iPTMnet" id="O95190"/>
<dbReference type="PhosphoSitePlus" id="O95190"/>
<dbReference type="BioMuta" id="OAZ2"/>
<dbReference type="MassIVE" id="O95190"/>
<dbReference type="PaxDb" id="9606-ENSP00000463013"/>
<dbReference type="PeptideAtlas" id="O95190"/>
<dbReference type="Antibodypedia" id="42839">
    <property type="antibodies" value="85 antibodies from 19 providers"/>
</dbReference>
<dbReference type="DNASU" id="4947"/>
<dbReference type="Ensembl" id="ENST00000326005.10">
    <molecule id="O95190-1"/>
    <property type="protein sequence ID" value="ENSP00000463013.1"/>
    <property type="gene ID" value="ENSG00000180304.14"/>
</dbReference>
<dbReference type="GeneID" id="4947"/>
<dbReference type="KEGG" id="hsa:4947"/>
<dbReference type="UCSC" id="uc002ano.3">
    <molecule id="O95190-1"/>
    <property type="organism name" value="human"/>
</dbReference>
<dbReference type="AGR" id="HGNC:8096"/>
<dbReference type="CTD" id="4947"/>
<dbReference type="DisGeNET" id="4947"/>
<dbReference type="GeneCards" id="OAZ2"/>
<dbReference type="HGNC" id="HGNC:8096">
    <property type="gene designation" value="OAZ2"/>
</dbReference>
<dbReference type="HPA" id="ENSG00000180304">
    <property type="expression patterns" value="Low tissue specificity"/>
</dbReference>
<dbReference type="MIM" id="604152">
    <property type="type" value="gene"/>
</dbReference>
<dbReference type="neXtProt" id="NX_O95190"/>
<dbReference type="OpenTargets" id="ENSG00000180304"/>
<dbReference type="PharmGKB" id="PA31885"/>
<dbReference type="VEuPathDB" id="HostDB:ENSG00000180304"/>
<dbReference type="eggNOG" id="KOG4387">
    <property type="taxonomic scope" value="Eukaryota"/>
</dbReference>
<dbReference type="GeneTree" id="ENSGT00940000157725"/>
<dbReference type="HOGENOM" id="CLU_085486_2_0_1"/>
<dbReference type="InParanoid" id="O95190"/>
<dbReference type="OMA" id="IVHFRYE"/>
<dbReference type="OrthoDB" id="5959761at2759"/>
<dbReference type="PAN-GO" id="O95190">
    <property type="GO annotations" value="4 GO annotations based on evolutionary models"/>
</dbReference>
<dbReference type="PhylomeDB" id="O95190"/>
<dbReference type="TreeFam" id="TF314741"/>
<dbReference type="PathwayCommons" id="O95190"/>
<dbReference type="Reactome" id="R-HSA-350562">
    <property type="pathway name" value="Regulation of ornithine decarboxylase (ODC)"/>
</dbReference>
<dbReference type="SignaLink" id="O95190"/>
<dbReference type="BioGRID-ORCS" id="4947">
    <property type="hits" value="18 hits in 1164 CRISPR screens"/>
</dbReference>
<dbReference type="ChiTaRS" id="OAZ2">
    <property type="organism name" value="human"/>
</dbReference>
<dbReference type="GeneWiki" id="OAZ2"/>
<dbReference type="GenomeRNAi" id="4947"/>
<dbReference type="Pharos" id="O95190">
    <property type="development level" value="Tbio"/>
</dbReference>
<dbReference type="PRO" id="PR:O95190"/>
<dbReference type="Proteomes" id="UP000005640">
    <property type="component" value="Chromosome 15"/>
</dbReference>
<dbReference type="RNAct" id="O95190">
    <property type="molecule type" value="protein"/>
</dbReference>
<dbReference type="Bgee" id="ENSG00000180304">
    <property type="expression patterns" value="Expressed in left testis and 210 other cell types or tissues"/>
</dbReference>
<dbReference type="ExpressionAtlas" id="O95190">
    <property type="expression patterns" value="baseline and differential"/>
</dbReference>
<dbReference type="GO" id="GO:0005737">
    <property type="term" value="C:cytoplasm"/>
    <property type="evidence" value="ECO:0000318"/>
    <property type="project" value="GO_Central"/>
</dbReference>
<dbReference type="GO" id="GO:0005829">
    <property type="term" value="C:cytosol"/>
    <property type="evidence" value="ECO:0000304"/>
    <property type="project" value="Reactome"/>
</dbReference>
<dbReference type="GO" id="GO:0005634">
    <property type="term" value="C:nucleus"/>
    <property type="evidence" value="ECO:0000318"/>
    <property type="project" value="GO_Central"/>
</dbReference>
<dbReference type="GO" id="GO:0008073">
    <property type="term" value="F:ornithine decarboxylase inhibitor activity"/>
    <property type="evidence" value="ECO:0000314"/>
    <property type="project" value="UniProtKB"/>
</dbReference>
<dbReference type="GO" id="GO:1902268">
    <property type="term" value="P:negative regulation of polyamine transmembrane transport"/>
    <property type="evidence" value="ECO:0007669"/>
    <property type="project" value="Ensembl"/>
</dbReference>
<dbReference type="GO" id="GO:0006596">
    <property type="term" value="P:polyamine biosynthetic process"/>
    <property type="evidence" value="ECO:0007669"/>
    <property type="project" value="UniProtKB-KW"/>
</dbReference>
<dbReference type="GO" id="GO:0006595">
    <property type="term" value="P:polyamine metabolic process"/>
    <property type="evidence" value="ECO:0000304"/>
    <property type="project" value="ProtInc"/>
</dbReference>
<dbReference type="GO" id="GO:0090316">
    <property type="term" value="P:positive regulation of intracellular protein transport"/>
    <property type="evidence" value="ECO:0000250"/>
    <property type="project" value="UniProtKB"/>
</dbReference>
<dbReference type="GO" id="GO:0045732">
    <property type="term" value="P:positive regulation of protein catabolic process"/>
    <property type="evidence" value="ECO:0000250"/>
    <property type="project" value="UniProtKB"/>
</dbReference>
<dbReference type="GO" id="GO:0075523">
    <property type="term" value="P:viral translational frameshifting"/>
    <property type="evidence" value="ECO:0007669"/>
    <property type="project" value="UniProtKB-KW"/>
</dbReference>
<dbReference type="FunFam" id="3.40.630.60:FF:000001">
    <property type="entry name" value="Ornithine decarboxylase antizyme 1"/>
    <property type="match status" value="1"/>
</dbReference>
<dbReference type="Gene3D" id="3.40.630.60">
    <property type="match status" value="1"/>
</dbReference>
<dbReference type="InterPro" id="IPR016181">
    <property type="entry name" value="Acyl_CoA_acyltransferase"/>
</dbReference>
<dbReference type="InterPro" id="IPR002993">
    <property type="entry name" value="ODC_AZ"/>
</dbReference>
<dbReference type="InterPro" id="IPR038581">
    <property type="entry name" value="ODC_AZ_sf"/>
</dbReference>
<dbReference type="PANTHER" id="PTHR10279">
    <property type="entry name" value="ORNITHINE DECARBOXYLASE ANTIZYME"/>
    <property type="match status" value="1"/>
</dbReference>
<dbReference type="PANTHER" id="PTHR10279:SF6">
    <property type="entry name" value="ORNITHINE DECARBOXYLASE ANTIZYME 2"/>
    <property type="match status" value="1"/>
</dbReference>
<dbReference type="Pfam" id="PF02100">
    <property type="entry name" value="ODC_AZ"/>
    <property type="match status" value="1"/>
</dbReference>
<dbReference type="SUPFAM" id="SSF55729">
    <property type="entry name" value="Acyl-CoA N-acyltransferases (Nat)"/>
    <property type="match status" value="1"/>
</dbReference>
<dbReference type="PROSITE" id="PS01337">
    <property type="entry name" value="ODC_AZ"/>
    <property type="match status" value="1"/>
</dbReference>
<name>OAZ2_HUMAN</name>